<sequence length="277" mass="29825">MPADSMEKPTASPIAGAPANSAQTPDKPKSASEHRKSSKPIMEKRRRARINESLGQLKTLILDALKKDSSRHSKLEKADILEMTVKHLRNLQRVQMTAALTADPSVLGKYRAGFNECMNEVTRFLSTCEGVNTEVRTRLLGHLSSCLGQIVAMNYQQPPSSQQPVHVQLPSSTPVPMPCKVNPAEAISPKVFQGGFQLVPATDGQFAFLIPNPAYTSSPGPVIPLYANATSPGGPPSQSPVQGLTSFAHKMPHMAQAVSPLGGSTRADSAESVWRPW</sequence>
<name>HES4B_XENLA</name>
<gene>
    <name type="primary">hes4-b</name>
    <name evidence="21" type="synonym">hairy2</name>
    <name evidence="20" type="synonym">hairy2b</name>
</gene>
<dbReference type="EMBL" id="AF383160">
    <property type="protein sequence ID" value="AAK63842.1"/>
    <property type="molecule type" value="mRNA"/>
</dbReference>
<dbReference type="EMBL" id="BC070547">
    <property type="protein sequence ID" value="AAH70547.1"/>
    <property type="molecule type" value="mRNA"/>
</dbReference>
<dbReference type="EMBL" id="AF356000">
    <property type="protein sequence ID" value="AAK39552.1"/>
    <property type="molecule type" value="mRNA"/>
</dbReference>
<dbReference type="RefSeq" id="NP_001082161.1">
    <property type="nucleotide sequence ID" value="NM_001088692.1"/>
</dbReference>
<dbReference type="SMR" id="Q90VV1"/>
<dbReference type="ELM" id="Q90VV1"/>
<dbReference type="DNASU" id="398258"/>
<dbReference type="GeneID" id="398258"/>
<dbReference type="KEGG" id="xla:398258"/>
<dbReference type="AGR" id="Xenbase:XB-GENE-865740"/>
<dbReference type="CTD" id="398258"/>
<dbReference type="Xenbase" id="XB-GENE-865740">
    <property type="gene designation" value="hes4.L"/>
</dbReference>
<dbReference type="OMA" id="GPCKLNP"/>
<dbReference type="OrthoDB" id="6085656at2759"/>
<dbReference type="Proteomes" id="UP000186698">
    <property type="component" value="Chromosome 7L"/>
</dbReference>
<dbReference type="Bgee" id="398258">
    <property type="expression patterns" value="Expressed in heart and 19 other cell types or tissues"/>
</dbReference>
<dbReference type="GO" id="GO:0005634">
    <property type="term" value="C:nucleus"/>
    <property type="evidence" value="ECO:0000250"/>
    <property type="project" value="UniProtKB"/>
</dbReference>
<dbReference type="GO" id="GO:0046982">
    <property type="term" value="F:protein heterodimerization activity"/>
    <property type="evidence" value="ECO:0000353"/>
    <property type="project" value="UniProtKB"/>
</dbReference>
<dbReference type="GO" id="GO:0000978">
    <property type="term" value="F:RNA polymerase II cis-regulatory region sequence-specific DNA binding"/>
    <property type="evidence" value="ECO:0000318"/>
    <property type="project" value="GO_Central"/>
</dbReference>
<dbReference type="GO" id="GO:0043565">
    <property type="term" value="F:sequence-specific DNA binding"/>
    <property type="evidence" value="ECO:0000353"/>
    <property type="project" value="UniProtKB"/>
</dbReference>
<dbReference type="GO" id="GO:0033504">
    <property type="term" value="P:floor plate development"/>
    <property type="evidence" value="ECO:0000315"/>
    <property type="project" value="UniProtKB"/>
</dbReference>
<dbReference type="GO" id="GO:0002088">
    <property type="term" value="P:lens development in camera-type eye"/>
    <property type="evidence" value="ECO:0000315"/>
    <property type="project" value="UniProtKB"/>
</dbReference>
<dbReference type="GO" id="GO:0007517">
    <property type="term" value="P:muscle organ development"/>
    <property type="evidence" value="ECO:0007669"/>
    <property type="project" value="UniProtKB-KW"/>
</dbReference>
<dbReference type="GO" id="GO:0043066">
    <property type="term" value="P:negative regulation of apoptotic process"/>
    <property type="evidence" value="ECO:0000315"/>
    <property type="project" value="UniProtKB"/>
</dbReference>
<dbReference type="GO" id="GO:0045892">
    <property type="term" value="P:negative regulation of DNA-templated transcription"/>
    <property type="evidence" value="ECO:0000315"/>
    <property type="project" value="UniProtKB"/>
</dbReference>
<dbReference type="GO" id="GO:0048642">
    <property type="term" value="P:negative regulation of skeletal muscle tissue development"/>
    <property type="evidence" value="ECO:0000315"/>
    <property type="project" value="UniProtKB"/>
</dbReference>
<dbReference type="GO" id="GO:0000122">
    <property type="term" value="P:negative regulation of transcription by RNA polymerase II"/>
    <property type="evidence" value="ECO:0000315"/>
    <property type="project" value="UniProtKB"/>
</dbReference>
<dbReference type="GO" id="GO:0014029">
    <property type="term" value="P:neural crest formation"/>
    <property type="evidence" value="ECO:0000315"/>
    <property type="project" value="UniProtKB"/>
</dbReference>
<dbReference type="GO" id="GO:0007219">
    <property type="term" value="P:Notch signaling pathway"/>
    <property type="evidence" value="ECO:0007669"/>
    <property type="project" value="UniProtKB-KW"/>
</dbReference>
<dbReference type="GO" id="GO:0021501">
    <property type="term" value="P:prechordal plate formation"/>
    <property type="evidence" value="ECO:0000315"/>
    <property type="project" value="UniProtKB"/>
</dbReference>
<dbReference type="GO" id="GO:0050767">
    <property type="term" value="P:regulation of neurogenesis"/>
    <property type="evidence" value="ECO:0000318"/>
    <property type="project" value="GO_Central"/>
</dbReference>
<dbReference type="CDD" id="cd11459">
    <property type="entry name" value="bHLH-O_HES1_4"/>
    <property type="match status" value="1"/>
</dbReference>
<dbReference type="FunFam" id="4.10.280.10:FF:000009">
    <property type="entry name" value="Transcription factor HES-1"/>
    <property type="match status" value="1"/>
</dbReference>
<dbReference type="Gene3D" id="6.10.250.980">
    <property type="match status" value="1"/>
</dbReference>
<dbReference type="Gene3D" id="4.10.280.10">
    <property type="entry name" value="Helix-loop-helix DNA-binding domain"/>
    <property type="match status" value="1"/>
</dbReference>
<dbReference type="InterPro" id="IPR011598">
    <property type="entry name" value="bHLH_dom"/>
</dbReference>
<dbReference type="InterPro" id="IPR050370">
    <property type="entry name" value="HES_HEY"/>
</dbReference>
<dbReference type="InterPro" id="IPR036638">
    <property type="entry name" value="HLH_DNA-bd_sf"/>
</dbReference>
<dbReference type="InterPro" id="IPR003650">
    <property type="entry name" value="Orange_dom"/>
</dbReference>
<dbReference type="PANTHER" id="PTHR10985">
    <property type="entry name" value="BASIC HELIX-LOOP-HELIX TRANSCRIPTION FACTOR, HES-RELATED"/>
    <property type="match status" value="1"/>
</dbReference>
<dbReference type="Pfam" id="PF07527">
    <property type="entry name" value="Hairy_orange"/>
    <property type="match status" value="1"/>
</dbReference>
<dbReference type="Pfam" id="PF00010">
    <property type="entry name" value="HLH"/>
    <property type="match status" value="1"/>
</dbReference>
<dbReference type="SMART" id="SM00353">
    <property type="entry name" value="HLH"/>
    <property type="match status" value="1"/>
</dbReference>
<dbReference type="SMART" id="SM00511">
    <property type="entry name" value="ORANGE"/>
    <property type="match status" value="1"/>
</dbReference>
<dbReference type="SUPFAM" id="SSF47459">
    <property type="entry name" value="HLH, helix-loop-helix DNA-binding domain"/>
    <property type="match status" value="1"/>
</dbReference>
<dbReference type="SUPFAM" id="SSF158457">
    <property type="entry name" value="Orange domain-like"/>
    <property type="match status" value="1"/>
</dbReference>
<dbReference type="PROSITE" id="PS50888">
    <property type="entry name" value="BHLH"/>
    <property type="match status" value="1"/>
</dbReference>
<dbReference type="PROSITE" id="PS51054">
    <property type="entry name" value="ORANGE"/>
    <property type="match status" value="1"/>
</dbReference>
<proteinExistence type="evidence at protein level"/>
<accession>Q90VV1</accession>
<reference evidence="23 26" key="1">
    <citation type="journal article" date="2001" name="Dev. Cell">
        <title>Molecular targets of vertebrate segmentation: two mechanisms control segmental expression of Xenopus hairy2 during somite formation.</title>
        <authorList>
            <person name="Davis R.L."/>
            <person name="Turner D.L."/>
            <person name="Evans L.M."/>
            <person name="Kirschner M.W."/>
        </authorList>
    </citation>
    <scope>NUCLEOTIDE SEQUENCE [MRNA]</scope>
    <scope>TISSUE SPECIFICITY</scope>
    <source>
        <tissue evidence="7">Tail bud</tissue>
    </source>
</reference>
<reference evidence="25" key="2">
    <citation type="submission" date="2001-03" db="EMBL/GenBank/DDBJ databases">
        <title>Involvement of hairy-related gene in organizer patterning.</title>
        <authorList>
            <person name="Ishibashi S."/>
            <person name="Katamura M."/>
            <person name="Hashimoto C."/>
            <person name="Cho K.W.Y."/>
        </authorList>
    </citation>
    <scope>NUCLEOTIDE SEQUENCE [MRNA]</scope>
</reference>
<reference evidence="25" key="3">
    <citation type="submission" date="2004-05" db="EMBL/GenBank/DDBJ databases">
        <authorList>
            <consortium name="NIH - Xenopus Gene Collection (XGC) project"/>
        </authorList>
    </citation>
    <scope>NUCLEOTIDE SEQUENCE [LARGE SCALE MRNA]</scope>
    <source>
        <tissue evidence="24">Kidney</tissue>
    </source>
</reference>
<reference evidence="23" key="4">
    <citation type="journal article" date="2003" name="Dev. Dyn.">
        <title>Identification of BOIP, a novel cDNA highly expressed during spermatogenesis that encodes a protein interacting with the orange domain of the hairy-related transcription factor HRT1/Hey1 in Xenopus and mouse.</title>
        <authorList>
            <person name="Van Wayenbergh R."/>
            <person name="Taelman V."/>
            <person name="Pichon B."/>
            <person name="Fischer A."/>
            <person name="Kricha S."/>
            <person name="Gessler M."/>
            <person name="Christophe D."/>
            <person name="Bellefroid E.J."/>
        </authorList>
    </citation>
    <scope>INTERACTION WITH HEY1</scope>
</reference>
<reference evidence="23" key="5">
    <citation type="journal article" date="2003" name="Dev. Genes Evol.">
        <title>Expression pattern of a basic helix-loop-helix transcription factor Xhairy2b during Xenopus laevis development.</title>
        <authorList>
            <person name="Tsuji S."/>
            <person name="Cho K.W.Y."/>
            <person name="Hashimoto C."/>
        </authorList>
    </citation>
    <scope>TISSUE SPECIFICITY</scope>
    <scope>DEVELOPMENTAL STAGE</scope>
</reference>
<reference evidence="23" key="6">
    <citation type="journal article" date="2004" name="Dev. Biol.">
        <title>Sequences downstream of the bHLH domain of the Xenopus hairy-related transcription factor-1 act as an extended dimerization domain that contributes to the selection of the partners.</title>
        <authorList>
            <person name="Taelman V."/>
            <person name="Van Wayenbergh R."/>
            <person name="Soelter M."/>
            <person name="Pichon B."/>
            <person name="Pieler T."/>
            <person name="Christophe D."/>
            <person name="Bellefroid E.J."/>
        </authorList>
    </citation>
    <scope>INTERACTION WITH HEY1</scope>
    <scope>TISSUE SPECIFICITY</scope>
</reference>
<reference evidence="23" key="7">
    <citation type="journal article" date="2005" name="Dev. Dyn.">
        <title>Xenopus hairy2b specifies anterior prechordal mesoderm identity within Spemann's organizer.</title>
        <authorList>
            <person name="Yamaguti M."/>
            <person name="Cho K.W.Y."/>
            <person name="Hashimoto C."/>
        </authorList>
    </citation>
    <scope>FUNCTION</scope>
    <scope>TISSUE SPECIFICITY</scope>
    <scope>INDUCTION</scope>
</reference>
<reference evidence="23" key="8">
    <citation type="journal article" date="2005" name="Dev. Growth Differ.">
        <title>Hairy is a cell context signal controlling Notch activity.</title>
        <authorList>
            <person name="Cui Y."/>
        </authorList>
    </citation>
    <scope>FUNCTION</scope>
    <scope>TISSUE SPECIFICITY</scope>
    <scope>INDUCTION</scope>
</reference>
<reference evidence="23" key="9">
    <citation type="journal article" date="2006" name="Development">
        <title>The Notch-effector HRT1 gene plays a role in glomerular development and patterning of the Xenopus pronephros anlagen.</title>
        <authorList>
            <person name="Taelman V."/>
            <person name="Van Campenhout C."/>
            <person name="Soelter M."/>
            <person name="Pieler T."/>
            <person name="Bellefroid E.J."/>
        </authorList>
    </citation>
    <scope>TISSUE SPECIFICITY</scope>
    <scope>INDUCTION</scope>
</reference>
<reference evidence="23" key="10">
    <citation type="journal article" date="2006" name="Int. J. Dev. Biol.">
        <title>Two modes of action by which Xenopus hairy2b establishes tissue demarcation in the Spemann-Mangold organizer.</title>
        <authorList>
            <person name="Murato Y."/>
            <person name="Yamaguti M."/>
            <person name="Katamura M."/>
            <person name="Cho K.W.Y."/>
            <person name="Hashimoto C."/>
        </authorList>
    </citation>
    <scope>FUNCTION</scope>
    <scope>FUNCTION OF WRPW MOTIF</scope>
</reference>
<reference evidence="23" key="11">
    <citation type="journal article" date="2007" name="Dev. Dyn.">
        <title>Xenopus hairy2 functions in neural crest formation by maintaining cells in a mitotic and undifferentiated state.</title>
        <authorList>
            <person name="Nagatomo K."/>
            <person name="Hashimoto C."/>
        </authorList>
    </citation>
    <scope>FUNCTION</scope>
</reference>
<reference evidence="23" key="12">
    <citation type="journal article" date="2007" name="Dev. Genes Evol.">
        <title>Two alloalleles of Xenopus laevis hairy2 gene-evolution of duplicated gene function from a developmental perspective.</title>
        <authorList>
            <person name="Murato Y."/>
            <person name="Nagatomo K."/>
            <person name="Yamaguti M."/>
            <person name="Hashimoto C."/>
        </authorList>
    </citation>
    <scope>FUNCTION</scope>
    <scope>TISSUE SPECIFICITY</scope>
    <scope>DEVELOPMENTAL STAGE</scope>
</reference>
<reference evidence="23" key="13">
    <citation type="journal article" date="2008" name="Dev. Biol.">
        <title>Hairy2-Id3 interactions play an essential role in Xenopus neural crest progenitor specification.</title>
        <authorList>
            <person name="Nichane M."/>
            <person name="de Croze N."/>
            <person name="Ren X."/>
            <person name="Souopgui J."/>
            <person name="Monsoro-Burq A.H."/>
            <person name="Bellefroid E.J."/>
        </authorList>
    </citation>
    <scope>FUNCTION</scope>
    <scope>INTERACTION WITH ID3</scope>
    <scope>INDUCTION</scope>
    <scope>MUTAGENESIS OF 43-GLU--ARG-47</scope>
</reference>
<reference evidence="23" key="14">
    <citation type="journal article" date="2008" name="Dev. Biol.">
        <title>Hairy2 functions through both DNA-binding and non DNA-binding mechanisms at the neural plate border in Xenopus.</title>
        <authorList>
            <person name="Nichane M."/>
            <person name="Ren X."/>
            <person name="Souopgui J."/>
            <person name="Bellefroid E.J."/>
        </authorList>
    </citation>
    <scope>FUNCTION</scope>
    <scope>TISSUE SPECIFICITY</scope>
    <scope>MUTAGENESIS OF 43-GLU--ARG-47</scope>
</reference>
<reference evidence="23" key="15">
    <citation type="journal article" date="2009" name="Dev. Dyn.">
        <title>Xhairy2 functions in Xenopus lens development by regulating p27(xic1) expression.</title>
        <authorList>
            <person name="Murato Y."/>
            <person name="Hashimoto C."/>
        </authorList>
    </citation>
    <scope>FUNCTION</scope>
    <scope>TISSUE SPECIFICITY</scope>
</reference>
<protein>
    <recommendedName>
        <fullName>Transcription factor HES-4-B</fullName>
    </recommendedName>
    <alternativeName>
        <fullName>Hairy and enhancer of split 4-B</fullName>
    </alternativeName>
    <alternativeName>
        <fullName>Protein hairy-2</fullName>
        <shortName evidence="21">Xhairy2</shortName>
    </alternativeName>
    <alternativeName>
        <fullName>Protein hairy-2a</fullName>
        <shortName evidence="22">Xhairy2b</shortName>
    </alternativeName>
</protein>
<evidence type="ECO:0000250" key="1">
    <source>
        <dbReference type="UniProtKB" id="P14003"/>
    </source>
</evidence>
<evidence type="ECO:0000250" key="2">
    <source>
        <dbReference type="UniProtKB" id="Q90Z12"/>
    </source>
</evidence>
<evidence type="ECO:0000255" key="3"/>
<evidence type="ECO:0000255" key="4">
    <source>
        <dbReference type="PROSITE-ProRule" id="PRU00380"/>
    </source>
</evidence>
<evidence type="ECO:0000255" key="5">
    <source>
        <dbReference type="PROSITE-ProRule" id="PRU00981"/>
    </source>
</evidence>
<evidence type="ECO:0000256" key="6">
    <source>
        <dbReference type="SAM" id="MobiDB-lite"/>
    </source>
</evidence>
<evidence type="ECO:0000269" key="7">
    <source>
    </source>
</evidence>
<evidence type="ECO:0000269" key="8">
    <source>
    </source>
</evidence>
<evidence type="ECO:0000269" key="9">
    <source>
    </source>
</evidence>
<evidence type="ECO:0000269" key="10">
    <source>
    </source>
</evidence>
<evidence type="ECO:0000269" key="11">
    <source>
    </source>
</evidence>
<evidence type="ECO:0000269" key="12">
    <source>
    </source>
</evidence>
<evidence type="ECO:0000269" key="13">
    <source>
    </source>
</evidence>
<evidence type="ECO:0000269" key="14">
    <source>
    </source>
</evidence>
<evidence type="ECO:0000269" key="15">
    <source>
    </source>
</evidence>
<evidence type="ECO:0000269" key="16">
    <source>
    </source>
</evidence>
<evidence type="ECO:0000269" key="17">
    <source>
    </source>
</evidence>
<evidence type="ECO:0000269" key="18">
    <source>
    </source>
</evidence>
<evidence type="ECO:0000269" key="19">
    <source>
    </source>
</evidence>
<evidence type="ECO:0000303" key="20">
    <source>
    </source>
</evidence>
<evidence type="ECO:0000303" key="21">
    <source>
    </source>
</evidence>
<evidence type="ECO:0000303" key="22">
    <source>
    </source>
</evidence>
<evidence type="ECO:0000305" key="23"/>
<evidence type="ECO:0000312" key="24">
    <source>
        <dbReference type="EMBL" id="AAH70547.1"/>
    </source>
</evidence>
<evidence type="ECO:0000312" key="25">
    <source>
        <dbReference type="EMBL" id="AAK39552.1"/>
    </source>
</evidence>
<evidence type="ECO:0000312" key="26">
    <source>
        <dbReference type="EMBL" id="AAK63842.1"/>
    </source>
</evidence>
<comment type="function">
    <text evidence="2 11 12 13 15 16 17 18 19">Transcriptional repressor. Binds DNA on N-box motifs: 5'-CACNAG-3'. Promotes floor plate development and prechordal plate development. Required for lens development as early as the stage of lens field formation, partly through regulation of gene expression of the cell cycle inhibitor cdknx/p27(xic1). Required for formation of the neural crest downstream of multiple signaling pathways, and acts at the neural plate border via both DNA-binding dependent and independent mechanisms; acts in a DNA-binding dependent manner to repress pro-apoptotic and neural crest differentiation genes, including id3, delta1, and cdknx/p27(xic1), and thus promote the cell survival of neural plate border cells and maintain them in an undifferentiated state. Represses transcription of id3, at least in part through the repression of bmp4. On the other hand, acts in a DNA-independent manner separate from the transcriptional repressor function, to stimulate cell proliferation and promote neural crest formation. Via this DNA-independent route, acts in neurulae upstream of stat3 to transiently up-regulate the notch ligand dll1/delta1, which in turn up-regulates id3 expression. Then interacts directly with id3, which blocks the transcriptional repressor function of hes4-B/hairy2b to allow the progression of neural crest progenitors through specification and differentiation. Also acts via repressor-dependent and repressor-independent mechanisms in early gastrulae to establish the prospective anterior prechordal mesoderm identity in the Spemann organizer; induces specific genes independently from direct transcriptional regulation, and represses the genes specific for neighboring tissues through direct transcriptional repression. Modulates lateral inhibition during notch signaling and regulates the cell context dependent effects of notch (which can have inhibitory, permissive or enhancing roles in muscle or neural differentiation). Inhibits myogenesis.</text>
</comment>
<comment type="subunit">
    <text evidence="1 2 9 10 18">Transcription repression requires formation of a complex with a corepressor protein of the Groucho/TLE family. Interacts with the bHLH protein hes6; this interaction may inhibit the transcriptional repressor activity (By similarity). Binds DNA in the form of a heterodimer with the bHLH protein hey1/hrt1. Interacts (via Orange domain) with id3 (via HLH domain).</text>
</comment>
<comment type="subcellular location">
    <subcellularLocation>
        <location evidence="1 4 5">Nucleus</location>
    </subcellularLocation>
</comment>
<comment type="tissue specificity">
    <text evidence="7 8 10 11 12 14 16 17 19">Dynamically expressed in the borders of several tissue territories. Expressed in the pre-placodal ectoderm (PPE) from gastrula stage. During gastrulation, expressed in the deep layer of the dorsal lip, the Spemann organizer and three distinct regions in the prospective neuroectoderm: neural plate border, presumptive floor plate/notoplate and anterior neural plate. At later stages, expression is localized to the anterior of the prechordal plate, the presomitic mesoderm, neural tube, neural crest derivatives and several tissues of the central nervous system, with expression in the developing floor plate continues to at least the tadpole stage. From the early tailbud stage, expressed in the dorsoanterior region of the developing pronephros. During early tailbud stages, broadly expressed within the pronephric mesoderm. and in the sensorial layer of the ectoderm covering the pronephros anlagen. During late tailbud to early tadpole stages, expressed in the ventral region of the pronephros. Expression remains in the proximal and distal tubules at late tadpole stages (stage 35).</text>
</comment>
<comment type="developmental stage">
    <text evidence="8 16">Expressed zygotically. Shows higher zygotic expression than hes4-A/hairy2a.</text>
</comment>
<comment type="induction">
    <text evidence="11 12 14 18">By Notch-signaling. Acts in a complex regulatory loop with other transcription factors and neural crest inducing signals at the neural plate border.</text>
</comment>
<comment type="domain">
    <text evidence="1">Has a particular type of basic domain (presence of a helix-interrupting proline) that binds to the N-box (CACNAG), rather than the canonical E-box (CANNTG).</text>
</comment>
<comment type="domain">
    <text evidence="1 13">The C-terminal WRPW motif is a transcriptional repression domain necessary for the interaction with Groucho/TLE family members, transcriptional corepressors recruited to specific target DNA by Hairy-related proteins (By similarity). The WPRW motif is also required for the inductive function, independent of a transcription regulation activity.</text>
</comment>
<comment type="caution">
    <text evidence="23">PubMed:17724611 reports that the probe used in PubMed:12774230 cross-hybridizes with hes4-A/hairy2a, so the maternal expression reported in PubMed:12774230 is in fact due to hes4-A/hairy2a and not hes4-B/hairy2b.</text>
</comment>
<feature type="chain" id="PRO_0000371246" description="Transcription factor HES-4-B">
    <location>
        <begin position="1"/>
        <end position="277"/>
    </location>
</feature>
<feature type="domain" description="bHLH" evidence="5">
    <location>
        <begin position="34"/>
        <end position="91"/>
    </location>
</feature>
<feature type="domain" description="Orange" evidence="4">
    <location>
        <begin position="110"/>
        <end position="143"/>
    </location>
</feature>
<feature type="region of interest" description="Disordered" evidence="6">
    <location>
        <begin position="1"/>
        <end position="44"/>
    </location>
</feature>
<feature type="region of interest" description="Disordered" evidence="6">
    <location>
        <begin position="258"/>
        <end position="277"/>
    </location>
</feature>
<feature type="short sequence motif" description="WRPW motif" evidence="3">
    <location>
        <begin position="274"/>
        <end position="277"/>
    </location>
</feature>
<feature type="compositionally biased region" description="Basic and acidic residues" evidence="6">
    <location>
        <begin position="26"/>
        <end position="35"/>
    </location>
</feature>
<feature type="mutagenesis site" description="Disrupts DNA-binding. Unable to repress id3 transcription. Disrupts the ability to promote cell survival and up-regulate neural border genes. Does not disrupt the ability to promote cell proliferation and neural crest cell formation." evidence="17 18">
    <original>EKRRR</original>
    <variation>RELEE</variation>
    <location>
        <begin position="43"/>
        <end position="47"/>
    </location>
</feature>
<organism>
    <name type="scientific">Xenopus laevis</name>
    <name type="common">African clawed frog</name>
    <dbReference type="NCBI Taxonomy" id="8355"/>
    <lineage>
        <taxon>Eukaryota</taxon>
        <taxon>Metazoa</taxon>
        <taxon>Chordata</taxon>
        <taxon>Craniata</taxon>
        <taxon>Vertebrata</taxon>
        <taxon>Euteleostomi</taxon>
        <taxon>Amphibia</taxon>
        <taxon>Batrachia</taxon>
        <taxon>Anura</taxon>
        <taxon>Pipoidea</taxon>
        <taxon>Pipidae</taxon>
        <taxon>Xenopodinae</taxon>
        <taxon>Xenopus</taxon>
        <taxon>Xenopus</taxon>
    </lineage>
</organism>
<keyword id="KW-0217">Developmental protein</keyword>
<keyword id="KW-0221">Differentiation</keyword>
<keyword id="KW-0238">DNA-binding</keyword>
<keyword id="KW-0517">Myogenesis</keyword>
<keyword id="KW-0524">Neurogenesis</keyword>
<keyword id="KW-0914">Notch signaling pathway</keyword>
<keyword id="KW-0539">Nucleus</keyword>
<keyword id="KW-1185">Reference proteome</keyword>
<keyword id="KW-0678">Repressor</keyword>
<keyword id="KW-0804">Transcription</keyword>
<keyword id="KW-0805">Transcription regulation</keyword>